<name>AOP1L_ARATH</name>
<evidence type="ECO:0000250" key="1"/>
<evidence type="ECO:0000255" key="2">
    <source>
        <dbReference type="PROSITE-ProRule" id="PRU00805"/>
    </source>
</evidence>
<evidence type="ECO:0000305" key="3"/>
<evidence type="ECO:0000305" key="4">
    <source>
    </source>
</evidence>
<accession>Q945B6</accession>
<dbReference type="EC" id="1.14.11.-"/>
<dbReference type="EMBL" id="AF417856">
    <property type="protein sequence ID" value="AAL14644.1"/>
    <property type="molecule type" value="mRNA"/>
</dbReference>
<dbReference type="SMR" id="Q945B6"/>
<dbReference type="ExpressionAtlas" id="Q945B6">
    <property type="expression patterns" value="baseline and differential"/>
</dbReference>
<dbReference type="GO" id="GO:0051213">
    <property type="term" value="F:dioxygenase activity"/>
    <property type="evidence" value="ECO:0007669"/>
    <property type="project" value="UniProtKB-KW"/>
</dbReference>
<dbReference type="GO" id="GO:0046872">
    <property type="term" value="F:metal ion binding"/>
    <property type="evidence" value="ECO:0007669"/>
    <property type="project" value="UniProtKB-KW"/>
</dbReference>
<dbReference type="FunFam" id="2.60.120.330:FF:000022">
    <property type="entry name" value="Probable 2-oxoglutarate-dependent dioxygenase AOP1.2"/>
    <property type="match status" value="1"/>
</dbReference>
<dbReference type="Gene3D" id="2.60.120.330">
    <property type="entry name" value="B-lactam Antibiotic, Isopenicillin N Synthase, Chain"/>
    <property type="match status" value="1"/>
</dbReference>
<dbReference type="InterPro" id="IPR026992">
    <property type="entry name" value="DIOX_N"/>
</dbReference>
<dbReference type="InterPro" id="IPR044861">
    <property type="entry name" value="IPNS-like_FE2OG_OXY"/>
</dbReference>
<dbReference type="InterPro" id="IPR027443">
    <property type="entry name" value="IPNS-like_sf"/>
</dbReference>
<dbReference type="InterPro" id="IPR050231">
    <property type="entry name" value="Iron_ascorbate_oxido_reductase"/>
</dbReference>
<dbReference type="InterPro" id="IPR005123">
    <property type="entry name" value="Oxoglu/Fe-dep_dioxygenase_dom"/>
</dbReference>
<dbReference type="PANTHER" id="PTHR47990">
    <property type="entry name" value="2-OXOGLUTARATE (2OG) AND FE(II)-DEPENDENT OXYGENASE SUPERFAMILY PROTEIN-RELATED"/>
    <property type="match status" value="1"/>
</dbReference>
<dbReference type="Pfam" id="PF03171">
    <property type="entry name" value="2OG-FeII_Oxy"/>
    <property type="match status" value="1"/>
</dbReference>
<dbReference type="Pfam" id="PF14226">
    <property type="entry name" value="DIOX_N"/>
    <property type="match status" value="1"/>
</dbReference>
<dbReference type="SUPFAM" id="SSF51197">
    <property type="entry name" value="Clavaminate synthase-like"/>
    <property type="match status" value="1"/>
</dbReference>
<dbReference type="PROSITE" id="PS51471">
    <property type="entry name" value="FE2OG_OXY"/>
    <property type="match status" value="1"/>
</dbReference>
<organism>
    <name type="scientific">Arabidopsis thaliana</name>
    <name type="common">Mouse-ear cress</name>
    <dbReference type="NCBI Taxonomy" id="3702"/>
    <lineage>
        <taxon>Eukaryota</taxon>
        <taxon>Viridiplantae</taxon>
        <taxon>Streptophyta</taxon>
        <taxon>Embryophyta</taxon>
        <taxon>Tracheophyta</taxon>
        <taxon>Spermatophyta</taxon>
        <taxon>Magnoliopsida</taxon>
        <taxon>eudicotyledons</taxon>
        <taxon>Gunneridae</taxon>
        <taxon>Pentapetalae</taxon>
        <taxon>rosids</taxon>
        <taxon>malvids</taxon>
        <taxon>Brassicales</taxon>
        <taxon>Brassicaceae</taxon>
        <taxon>Camelineae</taxon>
        <taxon>Arabidopsis</taxon>
    </lineage>
</organism>
<sequence>MDSDFVPPSVSFQLPVIDFSDQNLKPGSSKWDEVKADVLKALEDYGCFEAFFDKLSVELNRSVFEAMEDLFELPIPTKQRNVSSKPFHGYLCHNLYESLGIDDANVLEKVNDFTQQLWPDHGNKSISETIHLFSEQLVELDLMVRRMIMESFGIENYIDEHLNSTYYLTRLMKYTSPPDDDDDDEETKLGLRSHTDKNIITILHQYQVDGLEVKTKDDKWIKVKPSQDSVLVMVGDSLCALLNGRLHSPYHRVIMTGKKTRYSTGLFSIPKTGVIIDSPEELVDKEHPRIFKPFEYTDFLHFFQTEAGRIAQSALHAFAAF</sequence>
<feature type="chain" id="PRO_0000423933" description="Probable 2-oxoglutarate-dependent dioxygenase AOP1.2">
    <location>
        <begin position="1"/>
        <end position="321"/>
    </location>
</feature>
<feature type="domain" description="Fe2OG dioxygenase" evidence="2">
    <location>
        <begin position="165"/>
        <end position="270"/>
    </location>
</feature>
<feature type="binding site" evidence="2">
    <location>
        <position position="194"/>
    </location>
    <ligand>
        <name>Fe cation</name>
        <dbReference type="ChEBI" id="CHEBI:24875"/>
    </ligand>
</feature>
<feature type="binding site" evidence="2">
    <location>
        <position position="196"/>
    </location>
    <ligand>
        <name>Fe cation</name>
        <dbReference type="ChEBI" id="CHEBI:24875"/>
    </ligand>
</feature>
<feature type="binding site" evidence="2">
    <location>
        <position position="251"/>
    </location>
    <ligand>
        <name>Fe cation</name>
        <dbReference type="ChEBI" id="CHEBI:24875"/>
    </ligand>
</feature>
<feature type="binding site" evidence="2">
    <location>
        <position position="261"/>
    </location>
    <ligand>
        <name>2-oxoglutarate</name>
        <dbReference type="ChEBI" id="CHEBI:16810"/>
    </ligand>
</feature>
<comment type="function">
    <text evidence="1">Probable 2-oxoglutarate-dependent dioxygenase that may be involved in glucosinolates biosynthesis. May play a role in the production of aliphatic glucosinolates (By similarity).</text>
</comment>
<comment type="cofactor">
    <cofactor evidence="2">
        <name>Fe(2+)</name>
        <dbReference type="ChEBI" id="CHEBI:29033"/>
    </cofactor>
    <text evidence="2">Binds 1 Fe(2+) ion per subunit.</text>
</comment>
<comment type="similarity">
    <text evidence="3">Belongs to the iron/ascorbate-dependent oxidoreductase family.</text>
</comment>
<comment type="caution">
    <text evidence="4">AOP1, AOP2 and AOP3 are found in tandem and inverted duplications on chromosome IV and encode 2-oxoglutarate-dependent dioxygenases involved in glucosinolates biosynthesis. In cv. Columbia, AOP2 (AC Q9ZTA2) cDNA contains a 5-bp deletion that leads to a non-functional protein and AOP3 (AC Q9ZTA1) is not expressed. The functional and expressed alleles for AOP2 (AC Q945B5) and AOP3 (AC Q945B4) are found in cv. Cvi and cv. Landsberg erecta, respectively. No ecotype coexpresses both AOP2 and AOP3 genes. The catalytic role of AOP1 is still uncertain (PubMed:11251105).</text>
</comment>
<reference key="1">
    <citation type="journal article" date="2001" name="Plant Cell">
        <title>Gene duplication in the diversification of secondary metabolism: tandem 2-oxoglutarate-dependent dioxygenases control glucosinolate biosynthesis in Arabidopsis.</title>
        <authorList>
            <person name="Kliebenstein D.J."/>
            <person name="Lambrix V.M."/>
            <person name="Reichelt M."/>
            <person name="Gershenzon J."/>
            <person name="Mitchell-Olds T."/>
        </authorList>
    </citation>
    <scope>NUCLEOTIDE SEQUENCE [MRNA]</scope>
    <scope>GENE FAMILY</scope>
    <source>
        <strain>cv. Landsberg erecta</strain>
    </source>
</reference>
<protein>
    <recommendedName>
        <fullName>Probable 2-oxoglutarate-dependent dioxygenase AOP1.2</fullName>
        <ecNumber>1.14.11.-</ecNumber>
    </recommendedName>
</protein>
<proteinExistence type="evidence at transcript level"/>
<keyword id="KW-0223">Dioxygenase</keyword>
<keyword id="KW-0408">Iron</keyword>
<keyword id="KW-0479">Metal-binding</keyword>
<keyword id="KW-0560">Oxidoreductase</keyword>
<gene>
    <name type="primary">AOP1.2</name>
</gene>